<feature type="chain" id="PRO_0000444400" description="GATA-type transcription factor sreA">
    <location>
        <begin position="1"/>
        <end position="546"/>
    </location>
</feature>
<feature type="zinc finger region" description="GATA-type 1" evidence="3">
    <location>
        <begin position="103"/>
        <end position="127"/>
    </location>
</feature>
<feature type="zinc finger region" description="GATA-type 2" evidence="3">
    <location>
        <begin position="253"/>
        <end position="277"/>
    </location>
</feature>
<feature type="region of interest" description="Disordered" evidence="4">
    <location>
        <begin position="1"/>
        <end position="101"/>
    </location>
</feature>
<feature type="region of interest" description="Disordered" evidence="4">
    <location>
        <begin position="138"/>
        <end position="174"/>
    </location>
</feature>
<feature type="region of interest" description="Cystein-rich region (CRR)" evidence="1">
    <location>
        <begin position="180"/>
        <end position="198"/>
    </location>
</feature>
<feature type="region of interest" description="Disordered" evidence="4">
    <location>
        <begin position="217"/>
        <end position="242"/>
    </location>
</feature>
<feature type="region of interest" description="Disordered" evidence="4">
    <location>
        <begin position="301"/>
        <end position="332"/>
    </location>
</feature>
<feature type="region of interest" description="Disordered" evidence="4">
    <location>
        <begin position="371"/>
        <end position="531"/>
    </location>
</feature>
<feature type="coiled-coil region" evidence="2">
    <location>
        <begin position="508"/>
        <end position="546"/>
    </location>
</feature>
<feature type="compositionally biased region" description="Basic and acidic residues" evidence="4">
    <location>
        <begin position="16"/>
        <end position="27"/>
    </location>
</feature>
<feature type="compositionally biased region" description="Basic and acidic residues" evidence="4">
    <location>
        <begin position="43"/>
        <end position="56"/>
    </location>
</feature>
<feature type="compositionally biased region" description="Polar residues" evidence="4">
    <location>
        <begin position="65"/>
        <end position="91"/>
    </location>
</feature>
<feature type="compositionally biased region" description="Polar residues" evidence="4">
    <location>
        <begin position="162"/>
        <end position="172"/>
    </location>
</feature>
<feature type="compositionally biased region" description="Low complexity" evidence="4">
    <location>
        <begin position="318"/>
        <end position="331"/>
    </location>
</feature>
<feature type="compositionally biased region" description="Polar residues" evidence="4">
    <location>
        <begin position="423"/>
        <end position="453"/>
    </location>
</feature>
<feature type="compositionally biased region" description="Pro residues" evidence="4">
    <location>
        <begin position="496"/>
        <end position="505"/>
    </location>
</feature>
<feature type="compositionally biased region" description="Basic and acidic residues" evidence="4">
    <location>
        <begin position="513"/>
        <end position="531"/>
    </location>
</feature>
<proteinExistence type="evidence at transcript level"/>
<name>SREA_ASPFU</name>
<sequence>MLASVPQMDSVRSLPRNHDVVARHASAEDLDAAQQLISSAQAGREHTTDRHRDEKVTAPVRHQMKTSMNGQRWPEQQRTAPPAEKTSTSPKAQKDTSFLGHSCSNCGTKSTPLWRRSPTGAMICNACGLYLKARNVARPTKRNRMEPGSEAGGQQTGHGIAQSESASQGHCQSNSGGGSCPGGGNCNGTGGAEGCDGCPAYNNRVYKSAARGTVPIHSWRATNSGSDRPLAETENDAGKNGATVEGGNMLVSCQNCGTTVTPLWRRDENGHPICNACGLYYKLHGCYRPTTMKKSIIKRRKRVVPALRDQSPSGATYSSNGSSASPEASPAVLAHSHDDHYRYLSSDPTLQANHQRHYAVAPPPVDFTHFSATGSLSLPHHPPPPRLLEPERLSAPSHSPIPQFGRRSISPSTSGSAKKRTLAETTSSTDTASVPTTLESGSNQLPPIISTANPSPPGRLSSISTLLNHSGPHDESRLDPSLAALSRQQQHHKATPLPPHPPSQPLPGVSELESLKEDRRAKLQREAEEMREMLRAKERELAELGA</sequence>
<gene>
    <name evidence="7" type="primary">sreA</name>
    <name type="ORF">AFUA_5G11260</name>
</gene>
<comment type="function">
    <text evidence="5">GATA-type transcription repressor that regulates iron- acquisition genes through specific binding the GATA sequence element 5'-ATCWGATAA-3' of target promoters (PubMed:18721228). Iron acquisition regulation is critical for survival under both iron-limiting conditions (to acquire essential iron) and iron-replete conditions (to limit iron toxicity) (PubMed:18721228). SreA targets include genes encoding a number of key iron-regulated factors such as those involved in siderophore biosynthesis (PubMed:18721228).</text>
</comment>
<comment type="subcellular location">
    <subcellularLocation>
        <location evidence="8">Nucleus</location>
    </subcellularLocation>
</comment>
<comment type="induction">
    <text evidence="6">Expression is repressed by the zinc cluster transcription factor acuM in order to stimulate expression of genes involved in both reductive iron assimilation and siderophore-mediated iron uptake (PubMed:21062375).</text>
</comment>
<comment type="domain">
    <text evidence="1">The conserved cystein-rich region (CRR) localized between the zinc fingers is also involved in DNA-binding and transcription repressor activity (By similarity).</text>
</comment>
<comment type="disruption phenotype">
    <text evidence="5">During iron-replete conditions, partially derepresses synthesis of triacetylfusarinine C (TAFC) and uptake of iron resulting in increased cellular accumulation of both iron and ferricrocin (FC) (PubMed:18721228). Increases sensitivity to iron and oxidative stress (PubMed:18721228).</text>
</comment>
<protein>
    <recommendedName>
        <fullName evidence="7">GATA-type transcription factor sreA</fullName>
    </recommendedName>
    <alternativeName>
        <fullName evidence="7">Siderophore uptake regulator sreA</fullName>
    </alternativeName>
</protein>
<organism>
    <name type="scientific">Aspergillus fumigatus (strain ATCC MYA-4609 / CBS 101355 / FGSC A1100 / Af293)</name>
    <name type="common">Neosartorya fumigata</name>
    <dbReference type="NCBI Taxonomy" id="330879"/>
    <lineage>
        <taxon>Eukaryota</taxon>
        <taxon>Fungi</taxon>
        <taxon>Dikarya</taxon>
        <taxon>Ascomycota</taxon>
        <taxon>Pezizomycotina</taxon>
        <taxon>Eurotiomycetes</taxon>
        <taxon>Eurotiomycetidae</taxon>
        <taxon>Eurotiales</taxon>
        <taxon>Aspergillaceae</taxon>
        <taxon>Aspergillus</taxon>
        <taxon>Aspergillus subgen. Fumigati</taxon>
    </lineage>
</organism>
<keyword id="KW-0175">Coiled coil</keyword>
<keyword id="KW-0479">Metal-binding</keyword>
<keyword id="KW-0539">Nucleus</keyword>
<keyword id="KW-1185">Reference proteome</keyword>
<keyword id="KW-0677">Repeat</keyword>
<keyword id="KW-0804">Transcription</keyword>
<keyword id="KW-0805">Transcription regulation</keyword>
<keyword id="KW-0862">Zinc</keyword>
<keyword id="KW-0863">Zinc-finger</keyword>
<evidence type="ECO:0000250" key="1">
    <source>
        <dbReference type="UniProtKB" id="Q1K8E7"/>
    </source>
</evidence>
<evidence type="ECO:0000255" key="2"/>
<evidence type="ECO:0000255" key="3">
    <source>
        <dbReference type="PROSITE-ProRule" id="PRU00094"/>
    </source>
</evidence>
<evidence type="ECO:0000256" key="4">
    <source>
        <dbReference type="SAM" id="MobiDB-lite"/>
    </source>
</evidence>
<evidence type="ECO:0000269" key="5">
    <source>
    </source>
</evidence>
<evidence type="ECO:0000269" key="6">
    <source>
    </source>
</evidence>
<evidence type="ECO:0000303" key="7">
    <source>
    </source>
</evidence>
<evidence type="ECO:0000305" key="8"/>
<reference key="1">
    <citation type="journal article" date="2005" name="Nature">
        <title>Genomic sequence of the pathogenic and allergenic filamentous fungus Aspergillus fumigatus.</title>
        <authorList>
            <person name="Nierman W.C."/>
            <person name="Pain A."/>
            <person name="Anderson M.J."/>
            <person name="Wortman J.R."/>
            <person name="Kim H.S."/>
            <person name="Arroyo J."/>
            <person name="Berriman M."/>
            <person name="Abe K."/>
            <person name="Archer D.B."/>
            <person name="Bermejo C."/>
            <person name="Bennett J.W."/>
            <person name="Bowyer P."/>
            <person name="Chen D."/>
            <person name="Collins M."/>
            <person name="Coulsen R."/>
            <person name="Davies R."/>
            <person name="Dyer P.S."/>
            <person name="Farman M.L."/>
            <person name="Fedorova N."/>
            <person name="Fedorova N.D."/>
            <person name="Feldblyum T.V."/>
            <person name="Fischer R."/>
            <person name="Fosker N."/>
            <person name="Fraser A."/>
            <person name="Garcia J.L."/>
            <person name="Garcia M.J."/>
            <person name="Goble A."/>
            <person name="Goldman G.H."/>
            <person name="Gomi K."/>
            <person name="Griffith-Jones S."/>
            <person name="Gwilliam R."/>
            <person name="Haas B.J."/>
            <person name="Haas H."/>
            <person name="Harris D.E."/>
            <person name="Horiuchi H."/>
            <person name="Huang J."/>
            <person name="Humphray S."/>
            <person name="Jimenez J."/>
            <person name="Keller N."/>
            <person name="Khouri H."/>
            <person name="Kitamoto K."/>
            <person name="Kobayashi T."/>
            <person name="Konzack S."/>
            <person name="Kulkarni R."/>
            <person name="Kumagai T."/>
            <person name="Lafton A."/>
            <person name="Latge J.-P."/>
            <person name="Li W."/>
            <person name="Lord A."/>
            <person name="Lu C."/>
            <person name="Majoros W.H."/>
            <person name="May G.S."/>
            <person name="Miller B.L."/>
            <person name="Mohamoud Y."/>
            <person name="Molina M."/>
            <person name="Monod M."/>
            <person name="Mouyna I."/>
            <person name="Mulligan S."/>
            <person name="Murphy L.D."/>
            <person name="O'Neil S."/>
            <person name="Paulsen I."/>
            <person name="Penalva M.A."/>
            <person name="Pertea M."/>
            <person name="Price C."/>
            <person name="Pritchard B.L."/>
            <person name="Quail M.A."/>
            <person name="Rabbinowitsch E."/>
            <person name="Rawlins N."/>
            <person name="Rajandream M.A."/>
            <person name="Reichard U."/>
            <person name="Renauld H."/>
            <person name="Robson G.D."/>
            <person name="Rodriguez de Cordoba S."/>
            <person name="Rodriguez-Pena J.M."/>
            <person name="Ronning C.M."/>
            <person name="Rutter S."/>
            <person name="Salzberg S.L."/>
            <person name="Sanchez M."/>
            <person name="Sanchez-Ferrero J.C."/>
            <person name="Saunders D."/>
            <person name="Seeger K."/>
            <person name="Squares R."/>
            <person name="Squares S."/>
            <person name="Takeuchi M."/>
            <person name="Tekaia F."/>
            <person name="Turner G."/>
            <person name="Vazquez de Aldana C.R."/>
            <person name="Weidman J."/>
            <person name="White O."/>
            <person name="Woodward J.R."/>
            <person name="Yu J.-H."/>
            <person name="Fraser C.M."/>
            <person name="Galagan J.E."/>
            <person name="Asai K."/>
            <person name="Machida M."/>
            <person name="Hall N."/>
            <person name="Barrell B.G."/>
            <person name="Denning D.W."/>
        </authorList>
    </citation>
    <scope>NUCLEOTIDE SEQUENCE [LARGE SCALE GENOMIC DNA]</scope>
    <source>
        <strain>ATCC MYA-4609 / CBS 101355 / FGSC A1100 / Af293</strain>
    </source>
</reference>
<reference key="2">
    <citation type="journal article" date="2008" name="Mol. Microbiol.">
        <title>SreA-mediated iron regulation in Aspergillus fumigatus.</title>
        <authorList>
            <person name="Schrettl M."/>
            <person name="Kim H.S."/>
            <person name="Eisendle M."/>
            <person name="Kragl C."/>
            <person name="Nierman W.C."/>
            <person name="Heinekamp T."/>
            <person name="Werner E.R."/>
            <person name="Jacobsen I."/>
            <person name="Illmer P."/>
            <person name="Yi H."/>
            <person name="Brakhage A.A."/>
            <person name="Haas H."/>
        </authorList>
    </citation>
    <scope>FUNCTION</scope>
    <scope>DISRUPTION PHENOTYPE</scope>
</reference>
<reference key="3">
    <citation type="journal article" date="2010" name="Mol. Microbiol.">
        <title>Aspergillus fumigatus AcuM regulates both iron acquisition and gluconeogenesis.</title>
        <authorList>
            <person name="Liu H."/>
            <person name="Gravelat F.N."/>
            <person name="Chiang L.Y."/>
            <person name="Chen D."/>
            <person name="Vanier G."/>
            <person name="Ejzykowicz D.E."/>
            <person name="Ibrahim A.S."/>
            <person name="Nierman W.C."/>
            <person name="Sheppard D.C."/>
            <person name="Filler S.G."/>
        </authorList>
    </citation>
    <scope>INDUCTION</scope>
    <source>
        <strain>ATCC MYA-4609 / CBS 101355 / FGSC A1100 / Af293</strain>
    </source>
</reference>
<dbReference type="EMBL" id="AAHF01000003">
    <property type="protein sequence ID" value="EAL91485.1"/>
    <property type="molecule type" value="Genomic_DNA"/>
</dbReference>
<dbReference type="RefSeq" id="XP_753523.1">
    <property type="nucleotide sequence ID" value="XM_748430.1"/>
</dbReference>
<dbReference type="FunCoup" id="Q4WV91">
    <property type="interactions" value="453"/>
</dbReference>
<dbReference type="STRING" id="330879.Q4WV91"/>
<dbReference type="EnsemblFungi" id="EAL91485">
    <property type="protein sequence ID" value="EAL91485"/>
    <property type="gene ID" value="AFUA_5G11260"/>
</dbReference>
<dbReference type="GeneID" id="3510986"/>
<dbReference type="KEGG" id="afm:AFUA_5G11260"/>
<dbReference type="VEuPathDB" id="FungiDB:Afu5g11260"/>
<dbReference type="eggNOG" id="KOG1601">
    <property type="taxonomic scope" value="Eukaryota"/>
</dbReference>
<dbReference type="HOGENOM" id="CLU_021761_1_0_1"/>
<dbReference type="InParanoid" id="Q4WV91"/>
<dbReference type="OMA" id="CYRPTTM"/>
<dbReference type="OrthoDB" id="515401at2759"/>
<dbReference type="Proteomes" id="UP000002530">
    <property type="component" value="Chromosome 5"/>
</dbReference>
<dbReference type="GO" id="GO:0005634">
    <property type="term" value="C:nucleus"/>
    <property type="evidence" value="ECO:0000318"/>
    <property type="project" value="GO_Central"/>
</dbReference>
<dbReference type="GO" id="GO:0000981">
    <property type="term" value="F:DNA-binding transcription factor activity, RNA polymerase II-specific"/>
    <property type="evidence" value="ECO:0000318"/>
    <property type="project" value="GO_Central"/>
</dbReference>
<dbReference type="GO" id="GO:0000978">
    <property type="term" value="F:RNA polymerase II cis-regulatory region sequence-specific DNA binding"/>
    <property type="evidence" value="ECO:0000318"/>
    <property type="project" value="GO_Central"/>
</dbReference>
<dbReference type="GO" id="GO:0008270">
    <property type="term" value="F:zinc ion binding"/>
    <property type="evidence" value="ECO:0007669"/>
    <property type="project" value="UniProtKB-KW"/>
</dbReference>
<dbReference type="GO" id="GO:0010106">
    <property type="term" value="P:cellular response to iron ion starvation"/>
    <property type="evidence" value="ECO:0000270"/>
    <property type="project" value="AspGD"/>
</dbReference>
<dbReference type="GO" id="GO:0006879">
    <property type="term" value="P:intracellular iron ion homeostasis"/>
    <property type="evidence" value="ECO:0000315"/>
    <property type="project" value="AspGD"/>
</dbReference>
<dbReference type="GO" id="GO:0034757">
    <property type="term" value="P:negative regulation of iron ion transport"/>
    <property type="evidence" value="ECO:0000315"/>
    <property type="project" value="AspGD"/>
</dbReference>
<dbReference type="GO" id="GO:0000122">
    <property type="term" value="P:negative regulation of transcription by RNA polymerase II"/>
    <property type="evidence" value="ECO:0000318"/>
    <property type="project" value="GO_Central"/>
</dbReference>
<dbReference type="GO" id="GO:0045944">
    <property type="term" value="P:positive regulation of transcription by RNA polymerase II"/>
    <property type="evidence" value="ECO:0000318"/>
    <property type="project" value="GO_Central"/>
</dbReference>
<dbReference type="CDD" id="cd00202">
    <property type="entry name" value="ZnF_GATA"/>
    <property type="match status" value="2"/>
</dbReference>
<dbReference type="FunFam" id="3.30.50.10:FF:000007">
    <property type="entry name" value="Nitrogen regulatory AreA, N-terminal"/>
    <property type="match status" value="1"/>
</dbReference>
<dbReference type="FunFam" id="3.30.50.10:FF:000039">
    <property type="entry name" value="Siderophore transcription factor SreA"/>
    <property type="match status" value="1"/>
</dbReference>
<dbReference type="Gene3D" id="3.30.50.10">
    <property type="entry name" value="Erythroid Transcription Factor GATA-1, subunit A"/>
    <property type="match status" value="2"/>
</dbReference>
<dbReference type="InterPro" id="IPR039355">
    <property type="entry name" value="Transcription_factor_GATA"/>
</dbReference>
<dbReference type="InterPro" id="IPR000679">
    <property type="entry name" value="Znf_GATA"/>
</dbReference>
<dbReference type="InterPro" id="IPR013088">
    <property type="entry name" value="Znf_NHR/GATA"/>
</dbReference>
<dbReference type="PANTHER" id="PTHR10071:SF281">
    <property type="entry name" value="BOX A-BINDING FACTOR-RELATED"/>
    <property type="match status" value="1"/>
</dbReference>
<dbReference type="PANTHER" id="PTHR10071">
    <property type="entry name" value="TRANSCRIPTION FACTOR GATA FAMILY MEMBER"/>
    <property type="match status" value="1"/>
</dbReference>
<dbReference type="Pfam" id="PF00320">
    <property type="entry name" value="GATA"/>
    <property type="match status" value="2"/>
</dbReference>
<dbReference type="PRINTS" id="PR00619">
    <property type="entry name" value="GATAZNFINGER"/>
</dbReference>
<dbReference type="SMART" id="SM00401">
    <property type="entry name" value="ZnF_GATA"/>
    <property type="match status" value="2"/>
</dbReference>
<dbReference type="SUPFAM" id="SSF57716">
    <property type="entry name" value="Glucocorticoid receptor-like (DNA-binding domain)"/>
    <property type="match status" value="2"/>
</dbReference>
<dbReference type="PROSITE" id="PS00344">
    <property type="entry name" value="GATA_ZN_FINGER_1"/>
    <property type="match status" value="2"/>
</dbReference>
<dbReference type="PROSITE" id="PS50114">
    <property type="entry name" value="GATA_ZN_FINGER_2"/>
    <property type="match status" value="2"/>
</dbReference>
<accession>Q4WV91</accession>